<keyword id="KW-0687">Ribonucleoprotein</keyword>
<keyword id="KW-0689">Ribosomal protein</keyword>
<proteinExistence type="inferred from homology"/>
<name>RL7_PSEU2</name>
<sequence length="121" mass="12480">MSISQDDILNAVAEMSVLQVVELIKAFEEKFGVTAAAGSAGPAVAAAVVEEQTEFNVMLLEAGEKKVNVIKAVRELTGLGLKEAKAVVDGAPAMVLEAVAKDAADKAKATLEEAGAKVELK</sequence>
<dbReference type="EMBL" id="CP000075">
    <property type="protein sequence ID" value="AAY39586.1"/>
    <property type="molecule type" value="Genomic_DNA"/>
</dbReference>
<dbReference type="RefSeq" id="WP_002555497.1">
    <property type="nucleotide sequence ID" value="NC_007005.1"/>
</dbReference>
<dbReference type="RefSeq" id="YP_237624.1">
    <property type="nucleotide sequence ID" value="NC_007005.1"/>
</dbReference>
<dbReference type="SMR" id="Q4ZMN6"/>
<dbReference type="STRING" id="205918.Psyr_4556"/>
<dbReference type="GeneID" id="96221038"/>
<dbReference type="KEGG" id="psb:Psyr_4556"/>
<dbReference type="PATRIC" id="fig|205918.7.peg.4695"/>
<dbReference type="eggNOG" id="COG0222">
    <property type="taxonomic scope" value="Bacteria"/>
</dbReference>
<dbReference type="HOGENOM" id="CLU_086499_3_2_6"/>
<dbReference type="OrthoDB" id="9811748at2"/>
<dbReference type="Proteomes" id="UP000000426">
    <property type="component" value="Chromosome"/>
</dbReference>
<dbReference type="GO" id="GO:0022625">
    <property type="term" value="C:cytosolic large ribosomal subunit"/>
    <property type="evidence" value="ECO:0007669"/>
    <property type="project" value="TreeGrafter"/>
</dbReference>
<dbReference type="GO" id="GO:0003729">
    <property type="term" value="F:mRNA binding"/>
    <property type="evidence" value="ECO:0007669"/>
    <property type="project" value="TreeGrafter"/>
</dbReference>
<dbReference type="GO" id="GO:0003735">
    <property type="term" value="F:structural constituent of ribosome"/>
    <property type="evidence" value="ECO:0007669"/>
    <property type="project" value="InterPro"/>
</dbReference>
<dbReference type="GO" id="GO:0006412">
    <property type="term" value="P:translation"/>
    <property type="evidence" value="ECO:0007669"/>
    <property type="project" value="UniProtKB-UniRule"/>
</dbReference>
<dbReference type="CDD" id="cd00387">
    <property type="entry name" value="Ribosomal_L7_L12"/>
    <property type="match status" value="1"/>
</dbReference>
<dbReference type="FunFam" id="3.30.1390.10:FF:000001">
    <property type="entry name" value="50S ribosomal protein L7/L12"/>
    <property type="match status" value="1"/>
</dbReference>
<dbReference type="Gene3D" id="3.30.1390.10">
    <property type="match status" value="1"/>
</dbReference>
<dbReference type="Gene3D" id="1.20.5.710">
    <property type="entry name" value="Single helix bin"/>
    <property type="match status" value="1"/>
</dbReference>
<dbReference type="HAMAP" id="MF_00368">
    <property type="entry name" value="Ribosomal_bL12"/>
    <property type="match status" value="1"/>
</dbReference>
<dbReference type="InterPro" id="IPR000206">
    <property type="entry name" value="Ribosomal_bL12"/>
</dbReference>
<dbReference type="InterPro" id="IPR013823">
    <property type="entry name" value="Ribosomal_bL12_C"/>
</dbReference>
<dbReference type="InterPro" id="IPR014719">
    <property type="entry name" value="Ribosomal_bL12_C/ClpS-like"/>
</dbReference>
<dbReference type="InterPro" id="IPR008932">
    <property type="entry name" value="Ribosomal_bL12_oligo"/>
</dbReference>
<dbReference type="InterPro" id="IPR036235">
    <property type="entry name" value="Ribosomal_bL12_oligo_N_sf"/>
</dbReference>
<dbReference type="NCBIfam" id="TIGR00855">
    <property type="entry name" value="L12"/>
    <property type="match status" value="1"/>
</dbReference>
<dbReference type="PANTHER" id="PTHR45987">
    <property type="entry name" value="39S RIBOSOMAL PROTEIN L12"/>
    <property type="match status" value="1"/>
</dbReference>
<dbReference type="PANTHER" id="PTHR45987:SF4">
    <property type="entry name" value="LARGE RIBOSOMAL SUBUNIT PROTEIN BL12M"/>
    <property type="match status" value="1"/>
</dbReference>
<dbReference type="Pfam" id="PF00542">
    <property type="entry name" value="Ribosomal_L12"/>
    <property type="match status" value="1"/>
</dbReference>
<dbReference type="Pfam" id="PF16320">
    <property type="entry name" value="Ribosomal_L12_N"/>
    <property type="match status" value="1"/>
</dbReference>
<dbReference type="SUPFAM" id="SSF54736">
    <property type="entry name" value="ClpS-like"/>
    <property type="match status" value="1"/>
</dbReference>
<dbReference type="SUPFAM" id="SSF48300">
    <property type="entry name" value="Ribosomal protein L7/12, oligomerisation (N-terminal) domain"/>
    <property type="match status" value="1"/>
</dbReference>
<gene>
    <name evidence="1" type="primary">rplL</name>
    <name type="ordered locus">Psyr_4556</name>
</gene>
<reference key="1">
    <citation type="journal article" date="2005" name="Proc. Natl. Acad. Sci. U.S.A.">
        <title>Comparison of the complete genome sequences of Pseudomonas syringae pv. syringae B728a and pv. tomato DC3000.</title>
        <authorList>
            <person name="Feil H."/>
            <person name="Feil W.S."/>
            <person name="Chain P."/>
            <person name="Larimer F."/>
            <person name="Dibartolo G."/>
            <person name="Copeland A."/>
            <person name="Lykidis A."/>
            <person name="Trong S."/>
            <person name="Nolan M."/>
            <person name="Goltsman E."/>
            <person name="Thiel J."/>
            <person name="Malfatti S."/>
            <person name="Loper J.E."/>
            <person name="Lapidus A."/>
            <person name="Detter J.C."/>
            <person name="Land M."/>
            <person name="Richardson P.M."/>
            <person name="Kyrpides N.C."/>
            <person name="Ivanova N."/>
            <person name="Lindow S.E."/>
        </authorList>
    </citation>
    <scope>NUCLEOTIDE SEQUENCE [LARGE SCALE GENOMIC DNA]</scope>
    <source>
        <strain>B728a</strain>
    </source>
</reference>
<comment type="function">
    <text evidence="1">Forms part of the ribosomal stalk which helps the ribosome interact with GTP-bound translation factors. Is thus essential for accurate translation.</text>
</comment>
<comment type="subunit">
    <text evidence="1">Homodimer. Part of the ribosomal stalk of the 50S ribosomal subunit. Forms a multimeric L10(L12)X complex, where L10 forms an elongated spine to which 2 to 4 L12 dimers bind in a sequential fashion. Binds GTP-bound translation factors.</text>
</comment>
<comment type="similarity">
    <text evidence="1">Belongs to the bacterial ribosomal protein bL12 family.</text>
</comment>
<evidence type="ECO:0000255" key="1">
    <source>
        <dbReference type="HAMAP-Rule" id="MF_00368"/>
    </source>
</evidence>
<evidence type="ECO:0000305" key="2"/>
<accession>Q4ZMN6</accession>
<protein>
    <recommendedName>
        <fullName evidence="1">Large ribosomal subunit protein bL12</fullName>
    </recommendedName>
    <alternativeName>
        <fullName evidence="2">50S ribosomal protein L7/L12</fullName>
    </alternativeName>
</protein>
<organism>
    <name type="scientific">Pseudomonas syringae pv. syringae (strain B728a)</name>
    <dbReference type="NCBI Taxonomy" id="205918"/>
    <lineage>
        <taxon>Bacteria</taxon>
        <taxon>Pseudomonadati</taxon>
        <taxon>Pseudomonadota</taxon>
        <taxon>Gammaproteobacteria</taxon>
        <taxon>Pseudomonadales</taxon>
        <taxon>Pseudomonadaceae</taxon>
        <taxon>Pseudomonas</taxon>
        <taxon>Pseudomonas syringae</taxon>
    </lineage>
</organism>
<feature type="chain" id="PRO_0000243475" description="Large ribosomal subunit protein bL12">
    <location>
        <begin position="1"/>
        <end position="121"/>
    </location>
</feature>